<gene>
    <name type="primary">unc-94</name>
    <name type="synonym">tmd-1</name>
    <name type="ORF">C06A5.7</name>
</gene>
<accession>O01479</accession>
<accession>Q95Q88</accession>
<evidence type="ECO:0000250" key="1"/>
<evidence type="ECO:0000256" key="2">
    <source>
        <dbReference type="SAM" id="MobiDB-lite"/>
    </source>
</evidence>
<evidence type="ECO:0000305" key="3"/>
<evidence type="ECO:0007829" key="4">
    <source>
        <dbReference type="PDB" id="1PGV"/>
    </source>
</evidence>
<proteinExistence type="evidence at protein level"/>
<organism>
    <name type="scientific">Caenorhabditis elegans</name>
    <dbReference type="NCBI Taxonomy" id="6239"/>
    <lineage>
        <taxon>Eukaryota</taxon>
        <taxon>Metazoa</taxon>
        <taxon>Ecdysozoa</taxon>
        <taxon>Nematoda</taxon>
        <taxon>Chromadorea</taxon>
        <taxon>Rhabditida</taxon>
        <taxon>Rhabditina</taxon>
        <taxon>Rhabditomorpha</taxon>
        <taxon>Rhabditoidea</taxon>
        <taxon>Rhabditidae</taxon>
        <taxon>Peloderinae</taxon>
        <taxon>Caenorhabditis</taxon>
    </lineage>
</organism>
<dbReference type="EMBL" id="FO080102">
    <property type="protein sequence ID" value="CCD61217.1"/>
    <property type="molecule type" value="Genomic_DNA"/>
</dbReference>
<dbReference type="EMBL" id="FO080102">
    <property type="protein sequence ID" value="CCD61218.1"/>
    <property type="molecule type" value="Genomic_DNA"/>
</dbReference>
<dbReference type="PIR" id="T25521">
    <property type="entry name" value="T25521"/>
</dbReference>
<dbReference type="RefSeq" id="NP_001379540.1">
    <molecule id="O01479-1"/>
    <property type="nucleotide sequence ID" value="NM_001392388.1"/>
</dbReference>
<dbReference type="RefSeq" id="NP_491734.1">
    <property type="nucleotide sequence ID" value="NM_059333.3"/>
</dbReference>
<dbReference type="RefSeq" id="NP_491735.1">
    <molecule id="O01479-2"/>
    <property type="nucleotide sequence ID" value="NM_059334.5"/>
</dbReference>
<dbReference type="PDB" id="1PGV">
    <property type="method" value="X-ray"/>
    <property type="resolution" value="1.80 A"/>
    <property type="chains" value="A=199-392"/>
</dbReference>
<dbReference type="PDBsum" id="1PGV"/>
<dbReference type="SMR" id="O01479"/>
<dbReference type="BioGRID" id="37729">
    <property type="interactions" value="13"/>
</dbReference>
<dbReference type="FunCoup" id="O01479">
    <property type="interactions" value="1559"/>
</dbReference>
<dbReference type="STRING" id="6239.C06A5.7b.1"/>
<dbReference type="PaxDb" id="6239-C06A5.7b"/>
<dbReference type="PeptideAtlas" id="O01479"/>
<dbReference type="EnsemblMetazoa" id="C06A5.7a.1">
    <molecule id="O01479-1"/>
    <property type="protein sequence ID" value="C06A5.7a.1"/>
    <property type="gene ID" value="WBGene00006823"/>
</dbReference>
<dbReference type="EnsemblMetazoa" id="C06A5.7a.2">
    <molecule id="O01479-1"/>
    <property type="protein sequence ID" value="C06A5.7a.2"/>
    <property type="gene ID" value="WBGene00006823"/>
</dbReference>
<dbReference type="EnsemblMetazoa" id="C06A5.7b.1">
    <molecule id="O01479-2"/>
    <property type="protein sequence ID" value="C06A5.7b.1"/>
    <property type="gene ID" value="WBGene00006823"/>
</dbReference>
<dbReference type="GeneID" id="172275"/>
<dbReference type="KEGG" id="cel:CELE_C06A5.7"/>
<dbReference type="AGR" id="WB:WBGene00006823"/>
<dbReference type="CTD" id="172275"/>
<dbReference type="WormBase" id="C06A5.7a">
    <molecule id="O01479-1"/>
    <property type="protein sequence ID" value="CE29023"/>
    <property type="gene ID" value="WBGene00006823"/>
    <property type="gene designation" value="unc-94"/>
</dbReference>
<dbReference type="WormBase" id="C06A5.7b">
    <molecule id="O01479-2"/>
    <property type="protein sequence ID" value="CE29024"/>
    <property type="gene ID" value="WBGene00006823"/>
    <property type="gene designation" value="unc-94"/>
</dbReference>
<dbReference type="eggNOG" id="KOG3735">
    <property type="taxonomic scope" value="Eukaryota"/>
</dbReference>
<dbReference type="GeneTree" id="ENSGT00940000169280"/>
<dbReference type="InParanoid" id="O01479"/>
<dbReference type="OMA" id="PYQRDKL"/>
<dbReference type="OrthoDB" id="2163268at2759"/>
<dbReference type="PhylomeDB" id="O01479"/>
<dbReference type="Reactome" id="R-CEL-445355">
    <property type="pathway name" value="Smooth Muscle Contraction"/>
</dbReference>
<dbReference type="EvolutionaryTrace" id="O01479"/>
<dbReference type="PRO" id="PR:O01479"/>
<dbReference type="Proteomes" id="UP000001940">
    <property type="component" value="Chromosome I"/>
</dbReference>
<dbReference type="Bgee" id="WBGene00006823">
    <property type="expression patterns" value="Expressed in pharyngeal muscle cell (C elegans) and 4 other cell types or tissues"/>
</dbReference>
<dbReference type="GO" id="GO:0005737">
    <property type="term" value="C:cytoplasm"/>
    <property type="evidence" value="ECO:0000314"/>
    <property type="project" value="WormBase"/>
</dbReference>
<dbReference type="GO" id="GO:0005856">
    <property type="term" value="C:cytoskeleton"/>
    <property type="evidence" value="ECO:0000318"/>
    <property type="project" value="GO_Central"/>
</dbReference>
<dbReference type="GO" id="GO:0030016">
    <property type="term" value="C:myofibril"/>
    <property type="evidence" value="ECO:0000318"/>
    <property type="project" value="GO_Central"/>
</dbReference>
<dbReference type="GO" id="GO:0005865">
    <property type="term" value="C:striated muscle thin filament"/>
    <property type="evidence" value="ECO:0000314"/>
    <property type="project" value="WormBase"/>
</dbReference>
<dbReference type="GO" id="GO:1990357">
    <property type="term" value="C:terminal web"/>
    <property type="evidence" value="ECO:0000314"/>
    <property type="project" value="WormBase"/>
</dbReference>
<dbReference type="GO" id="GO:0051015">
    <property type="term" value="F:actin filament binding"/>
    <property type="evidence" value="ECO:0000305"/>
    <property type="project" value="WormBase"/>
</dbReference>
<dbReference type="GO" id="GO:0005523">
    <property type="term" value="F:tropomyosin binding"/>
    <property type="evidence" value="ECO:0000318"/>
    <property type="project" value="GO_Central"/>
</dbReference>
<dbReference type="GO" id="GO:0007015">
    <property type="term" value="P:actin filament organization"/>
    <property type="evidence" value="ECO:0000318"/>
    <property type="project" value="GO_Central"/>
</dbReference>
<dbReference type="GO" id="GO:0009792">
    <property type="term" value="P:embryo development ending in birth or egg hatching"/>
    <property type="evidence" value="ECO:0000315"/>
    <property type="project" value="WormBase"/>
</dbReference>
<dbReference type="GO" id="GO:0040011">
    <property type="term" value="P:locomotion"/>
    <property type="evidence" value="ECO:0000315"/>
    <property type="project" value="WormBase"/>
</dbReference>
<dbReference type="GO" id="GO:0071689">
    <property type="term" value="P:muscle thin filament assembly"/>
    <property type="evidence" value="ECO:0000315"/>
    <property type="project" value="WormBase"/>
</dbReference>
<dbReference type="GO" id="GO:0030239">
    <property type="term" value="P:myofibril assembly"/>
    <property type="evidence" value="ECO:0000318"/>
    <property type="project" value="GO_Central"/>
</dbReference>
<dbReference type="GO" id="GO:0030835">
    <property type="term" value="P:negative regulation of actin filament depolymerization"/>
    <property type="evidence" value="ECO:0000314"/>
    <property type="project" value="WormBase"/>
</dbReference>
<dbReference type="GO" id="GO:0002119">
    <property type="term" value="P:nematode larval development"/>
    <property type="evidence" value="ECO:0000315"/>
    <property type="project" value="WormBase"/>
</dbReference>
<dbReference type="GO" id="GO:0051694">
    <property type="term" value="P:pointed-end actin filament capping"/>
    <property type="evidence" value="ECO:0000314"/>
    <property type="project" value="WormBase"/>
</dbReference>
<dbReference type="GO" id="GO:0045214">
    <property type="term" value="P:sarcomere organization"/>
    <property type="evidence" value="ECO:0000315"/>
    <property type="project" value="WormBase"/>
</dbReference>
<dbReference type="DisProt" id="DP02982"/>
<dbReference type="FunFam" id="3.80.10.10:FF:000099">
    <property type="entry name" value="Tropomodulin, isoform C"/>
    <property type="match status" value="1"/>
</dbReference>
<dbReference type="Gene3D" id="3.80.10.10">
    <property type="entry name" value="Ribonuclease Inhibitor"/>
    <property type="match status" value="1"/>
</dbReference>
<dbReference type="InterPro" id="IPR032675">
    <property type="entry name" value="LRR_dom_sf"/>
</dbReference>
<dbReference type="InterPro" id="IPR004934">
    <property type="entry name" value="TMOD"/>
</dbReference>
<dbReference type="PANTHER" id="PTHR10901">
    <property type="entry name" value="TROPOMODULIN"/>
    <property type="match status" value="1"/>
</dbReference>
<dbReference type="PANTHER" id="PTHR10901:SF6">
    <property type="entry name" value="TROPOMODULIN, ISOFORM N"/>
    <property type="match status" value="1"/>
</dbReference>
<dbReference type="Pfam" id="PF03250">
    <property type="entry name" value="Tropomodulin"/>
    <property type="match status" value="1"/>
</dbReference>
<dbReference type="SUPFAM" id="SSF52047">
    <property type="entry name" value="RNI-like"/>
    <property type="match status" value="1"/>
</dbReference>
<reference key="1">
    <citation type="journal article" date="1998" name="Science">
        <title>Genome sequence of the nematode C. elegans: a platform for investigating biology.</title>
        <authorList>
            <consortium name="The C. elegans sequencing consortium"/>
        </authorList>
    </citation>
    <scope>NUCLEOTIDE SEQUENCE [LARGE SCALE GENOMIC DNA]</scope>
    <scope>ALTERNATIVE SPLICING</scope>
    <source>
        <strain>Bristol N2</strain>
    </source>
</reference>
<reference key="2">
    <citation type="journal article" date="2004" name="Proteins">
        <title>Structural genomics of Caenorhabditis elegans: crystal structure of the tropomodulin C-terminal domain.</title>
        <authorList>
            <person name="Lu S."/>
            <person name="Symersky J."/>
            <person name="Li S."/>
            <person name="Carson M."/>
            <person name="Chen L."/>
            <person name="Meehan E."/>
            <person name="Luo M."/>
        </authorList>
    </citation>
    <scope>X-RAY CRYSTALLOGRAPHY (1.8 ANGSTROMS) OF 199-392</scope>
</reference>
<name>TMOD_CAEEL</name>
<keyword id="KW-0002">3D-structure</keyword>
<keyword id="KW-0009">Actin-binding</keyword>
<keyword id="KW-0025">Alternative splicing</keyword>
<keyword id="KW-0963">Cytoplasm</keyword>
<keyword id="KW-0206">Cytoskeleton</keyword>
<keyword id="KW-1185">Reference proteome</keyword>
<feature type="chain" id="PRO_0000186138" description="Tropomodulin">
    <location>
        <begin position="1"/>
        <end position="392"/>
    </location>
</feature>
<feature type="region of interest" description="Disordered" evidence="2">
    <location>
        <begin position="1"/>
        <end position="30"/>
    </location>
</feature>
<feature type="region of interest" description="Disordered" evidence="2">
    <location>
        <begin position="59"/>
        <end position="90"/>
    </location>
</feature>
<feature type="region of interest" description="Disordered" evidence="2">
    <location>
        <begin position="118"/>
        <end position="138"/>
    </location>
</feature>
<feature type="compositionally biased region" description="Polar residues" evidence="2">
    <location>
        <begin position="16"/>
        <end position="29"/>
    </location>
</feature>
<feature type="compositionally biased region" description="Basic and acidic residues" evidence="2">
    <location>
        <begin position="76"/>
        <end position="90"/>
    </location>
</feature>
<feature type="compositionally biased region" description="Basic and acidic residues" evidence="2">
    <location>
        <begin position="122"/>
        <end position="138"/>
    </location>
</feature>
<feature type="splice variant" id="VSP_016398" description="In isoform b." evidence="3">
    <original>MSQAKTD</original>
    <variation>MSNMEPPPPMFPRSRIYHS</variation>
    <location>
        <begin position="1"/>
        <end position="7"/>
    </location>
</feature>
<feature type="splice variant" id="VSP_016399" description="In isoform b." evidence="3">
    <location>
        <begin position="39"/>
        <end position="41"/>
    </location>
</feature>
<feature type="helix" evidence="4">
    <location>
        <begin position="224"/>
        <end position="232"/>
    </location>
</feature>
<feature type="strand" evidence="4">
    <location>
        <begin position="240"/>
        <end position="242"/>
    </location>
</feature>
<feature type="helix" evidence="4">
    <location>
        <begin position="251"/>
        <end position="261"/>
    </location>
</feature>
<feature type="strand" evidence="4">
    <location>
        <begin position="269"/>
        <end position="271"/>
    </location>
</feature>
<feature type="helix" evidence="4">
    <location>
        <begin position="279"/>
        <end position="282"/>
    </location>
</feature>
<feature type="helix" evidence="4">
    <location>
        <begin position="285"/>
        <end position="291"/>
    </location>
</feature>
<feature type="strand" evidence="4">
    <location>
        <begin position="297"/>
        <end position="299"/>
    </location>
</feature>
<feature type="strand" evidence="4">
    <location>
        <begin position="302"/>
        <end position="304"/>
    </location>
</feature>
<feature type="helix" evidence="4">
    <location>
        <begin position="307"/>
        <end position="316"/>
    </location>
</feature>
<feature type="turn" evidence="4">
    <location>
        <begin position="317"/>
        <end position="320"/>
    </location>
</feature>
<feature type="strand" evidence="4">
    <location>
        <begin position="324"/>
        <end position="327"/>
    </location>
</feature>
<feature type="helix" evidence="4">
    <location>
        <begin position="338"/>
        <end position="350"/>
    </location>
</feature>
<feature type="strand" evidence="4">
    <location>
        <begin position="356"/>
        <end position="358"/>
    </location>
</feature>
<feature type="helix" evidence="4">
    <location>
        <begin position="364"/>
        <end position="385"/>
    </location>
</feature>
<protein>
    <recommendedName>
        <fullName>Tropomodulin</fullName>
    </recommendedName>
    <alternativeName>
        <fullName>Tmod-like protein</fullName>
        <shortName>cTmd1</shortName>
    </alternativeName>
    <alternativeName>
        <fullName>Uncoordinated protein 94</fullName>
    </alternativeName>
</protein>
<sequence length="392" mass="44398">MSQAKTDYYSEEKTFSAPSANSQQGTQLPSKVYNKGLKDLEDNDIEGLLSSLSIDELEDLNNDFDPDNSMLPPSQRCRDQTDKEPTGPYKRDNLLKFLEDKAKTEKDWEDVCPYTPGQKRGKVYDSDSGRNSEEPENGKMEMPIEIDLDDDEEELECALVTAPEKDLVDLAGILGMHNVLNQPQYYNALKGKTQDESTGTTFNGIMQSYVPRIVPDEPDNDTDVESCINRLREDDTDLKEVNINNMKRVSKERIRSLIEAACNSKHIEKFSLANTAISDSEARGLIELIETSPSLRVLNVESNFLTPELLARLLRSTLVTQSIVEFKADNQRQSVLGNQVEMDMMMAIEENESLLRVGISFASMEARHRVSEALERNYERVRLRRLGKDPNV</sequence>
<comment type="function">
    <text evidence="1">Acts as the pointed end capping protein which maintains the length and dynamics of the actin filament. Blocks the elongation and depolymerization of the actin filaments at the pointed end (By similarity).</text>
</comment>
<comment type="subunit">
    <text evidence="1">Binds to the N-terminus of actin.</text>
</comment>
<comment type="subcellular location">
    <subcellularLocation>
        <location evidence="1">Cytoplasm</location>
        <location evidence="1">Cytoskeleton</location>
    </subcellularLocation>
</comment>
<comment type="alternative products">
    <event type="alternative splicing"/>
    <isoform>
        <id>O01479-1</id>
        <name>a</name>
        <sequence type="displayed"/>
    </isoform>
    <isoform>
        <id>O01479-2</id>
        <name>b</name>
        <sequence type="described" ref="VSP_016398 VSP_016399"/>
    </isoform>
</comment>
<comment type="similarity">
    <text evidence="3">Belongs to the tropomodulin family.</text>
</comment>